<keyword id="KW-0067">ATP-binding</keyword>
<keyword id="KW-0963">Cytoplasm</keyword>
<keyword id="KW-0418">Kinase</keyword>
<keyword id="KW-0547">Nucleotide-binding</keyword>
<keyword id="KW-0808">Transferase</keyword>
<sequence length="219" mass="24595">MKAINIALDGPAAAGKSTIAKRVASELSMIYVDTGAMYRALTYKYLKLNKTEDFAKLVDQTTLDLTYKADKGQCVILDNEDVTDFLRNNDVTQHVSYVASKEPVRSFAVKKQKELAAEKGIVMDGRDIGTVVLPDADLKVYMIASVEERAERRYKDNQLRGIESNFEDLKRDIEARDQYDMNREISPLRKADDAVTLDTTGKSIEEVTDEILAMVSQIK</sequence>
<evidence type="ECO:0000255" key="1">
    <source>
        <dbReference type="HAMAP-Rule" id="MF_00238"/>
    </source>
</evidence>
<protein>
    <recommendedName>
        <fullName evidence="1">Cytidylate kinase</fullName>
        <shortName evidence="1">CK</shortName>
        <ecNumber evidence="1">2.7.4.25</ecNumber>
    </recommendedName>
    <alternativeName>
        <fullName evidence="1">Cytidine monophosphate kinase</fullName>
        <shortName evidence="1">CMP kinase</shortName>
    </alternativeName>
</protein>
<dbReference type="EC" id="2.7.4.25" evidence="1"/>
<dbReference type="EMBL" id="CP000046">
    <property type="protein sequence ID" value="AAW36712.1"/>
    <property type="molecule type" value="Genomic_DNA"/>
</dbReference>
<dbReference type="RefSeq" id="WP_000644391.1">
    <property type="nucleotide sequence ID" value="NZ_JBGOFO010000003.1"/>
</dbReference>
<dbReference type="SMR" id="Q5HFU6"/>
<dbReference type="KEGG" id="sac:SACOL1518"/>
<dbReference type="HOGENOM" id="CLU_079959_0_2_9"/>
<dbReference type="Proteomes" id="UP000000530">
    <property type="component" value="Chromosome"/>
</dbReference>
<dbReference type="GO" id="GO:0005829">
    <property type="term" value="C:cytosol"/>
    <property type="evidence" value="ECO:0007669"/>
    <property type="project" value="TreeGrafter"/>
</dbReference>
<dbReference type="GO" id="GO:0005524">
    <property type="term" value="F:ATP binding"/>
    <property type="evidence" value="ECO:0007669"/>
    <property type="project" value="UniProtKB-UniRule"/>
</dbReference>
<dbReference type="GO" id="GO:0036430">
    <property type="term" value="F:CMP kinase activity"/>
    <property type="evidence" value="ECO:0007669"/>
    <property type="project" value="RHEA"/>
</dbReference>
<dbReference type="GO" id="GO:0036431">
    <property type="term" value="F:dCMP kinase activity"/>
    <property type="evidence" value="ECO:0007669"/>
    <property type="project" value="RHEA"/>
</dbReference>
<dbReference type="GO" id="GO:0015949">
    <property type="term" value="P:nucleobase-containing small molecule interconversion"/>
    <property type="evidence" value="ECO:0007669"/>
    <property type="project" value="TreeGrafter"/>
</dbReference>
<dbReference type="GO" id="GO:0006220">
    <property type="term" value="P:pyrimidine nucleotide metabolic process"/>
    <property type="evidence" value="ECO:0007669"/>
    <property type="project" value="UniProtKB-UniRule"/>
</dbReference>
<dbReference type="CDD" id="cd02020">
    <property type="entry name" value="CMPK"/>
    <property type="match status" value="1"/>
</dbReference>
<dbReference type="Gene3D" id="3.40.50.300">
    <property type="entry name" value="P-loop containing nucleotide triphosphate hydrolases"/>
    <property type="match status" value="1"/>
</dbReference>
<dbReference type="HAMAP" id="MF_00238">
    <property type="entry name" value="Cytidyl_kinase_type1"/>
    <property type="match status" value="1"/>
</dbReference>
<dbReference type="InterPro" id="IPR003136">
    <property type="entry name" value="Cytidylate_kin"/>
</dbReference>
<dbReference type="InterPro" id="IPR011994">
    <property type="entry name" value="Cytidylate_kinase_dom"/>
</dbReference>
<dbReference type="InterPro" id="IPR027417">
    <property type="entry name" value="P-loop_NTPase"/>
</dbReference>
<dbReference type="NCBIfam" id="TIGR00017">
    <property type="entry name" value="cmk"/>
    <property type="match status" value="1"/>
</dbReference>
<dbReference type="PANTHER" id="PTHR21299:SF2">
    <property type="entry name" value="CYTIDYLATE KINASE"/>
    <property type="match status" value="1"/>
</dbReference>
<dbReference type="PANTHER" id="PTHR21299">
    <property type="entry name" value="CYTIDYLATE KINASE/PANTOATE-BETA-ALANINE LIGASE"/>
    <property type="match status" value="1"/>
</dbReference>
<dbReference type="Pfam" id="PF02224">
    <property type="entry name" value="Cytidylate_kin"/>
    <property type="match status" value="1"/>
</dbReference>
<dbReference type="SUPFAM" id="SSF52540">
    <property type="entry name" value="P-loop containing nucleoside triphosphate hydrolases"/>
    <property type="match status" value="1"/>
</dbReference>
<proteinExistence type="inferred from homology"/>
<comment type="catalytic activity">
    <reaction evidence="1">
        <text>CMP + ATP = CDP + ADP</text>
        <dbReference type="Rhea" id="RHEA:11600"/>
        <dbReference type="ChEBI" id="CHEBI:30616"/>
        <dbReference type="ChEBI" id="CHEBI:58069"/>
        <dbReference type="ChEBI" id="CHEBI:60377"/>
        <dbReference type="ChEBI" id="CHEBI:456216"/>
        <dbReference type="EC" id="2.7.4.25"/>
    </reaction>
</comment>
<comment type="catalytic activity">
    <reaction evidence="1">
        <text>dCMP + ATP = dCDP + ADP</text>
        <dbReference type="Rhea" id="RHEA:25094"/>
        <dbReference type="ChEBI" id="CHEBI:30616"/>
        <dbReference type="ChEBI" id="CHEBI:57566"/>
        <dbReference type="ChEBI" id="CHEBI:58593"/>
        <dbReference type="ChEBI" id="CHEBI:456216"/>
        <dbReference type="EC" id="2.7.4.25"/>
    </reaction>
</comment>
<comment type="subcellular location">
    <subcellularLocation>
        <location evidence="1">Cytoplasm</location>
    </subcellularLocation>
</comment>
<comment type="similarity">
    <text evidence="1">Belongs to the cytidylate kinase family. Type 1 subfamily.</text>
</comment>
<accession>Q5HFU6</accession>
<organism>
    <name type="scientific">Staphylococcus aureus (strain COL)</name>
    <dbReference type="NCBI Taxonomy" id="93062"/>
    <lineage>
        <taxon>Bacteria</taxon>
        <taxon>Bacillati</taxon>
        <taxon>Bacillota</taxon>
        <taxon>Bacilli</taxon>
        <taxon>Bacillales</taxon>
        <taxon>Staphylococcaceae</taxon>
        <taxon>Staphylococcus</taxon>
    </lineage>
</organism>
<gene>
    <name evidence="1" type="primary">cmk</name>
    <name type="ordered locus">SACOL1518</name>
</gene>
<reference key="1">
    <citation type="journal article" date="2005" name="J. Bacteriol.">
        <title>Insights on evolution of virulence and resistance from the complete genome analysis of an early methicillin-resistant Staphylococcus aureus strain and a biofilm-producing methicillin-resistant Staphylococcus epidermidis strain.</title>
        <authorList>
            <person name="Gill S.R."/>
            <person name="Fouts D.E."/>
            <person name="Archer G.L."/>
            <person name="Mongodin E.F."/>
            <person name="DeBoy R.T."/>
            <person name="Ravel J."/>
            <person name="Paulsen I.T."/>
            <person name="Kolonay J.F."/>
            <person name="Brinkac L.M."/>
            <person name="Beanan M.J."/>
            <person name="Dodson R.J."/>
            <person name="Daugherty S.C."/>
            <person name="Madupu R."/>
            <person name="Angiuoli S.V."/>
            <person name="Durkin A.S."/>
            <person name="Haft D.H."/>
            <person name="Vamathevan J.J."/>
            <person name="Khouri H."/>
            <person name="Utterback T.R."/>
            <person name="Lee C."/>
            <person name="Dimitrov G."/>
            <person name="Jiang L."/>
            <person name="Qin H."/>
            <person name="Weidman J."/>
            <person name="Tran K."/>
            <person name="Kang K.H."/>
            <person name="Hance I.R."/>
            <person name="Nelson K.E."/>
            <person name="Fraser C.M."/>
        </authorList>
    </citation>
    <scope>NUCLEOTIDE SEQUENCE [LARGE SCALE GENOMIC DNA]</scope>
    <source>
        <strain>COL</strain>
    </source>
</reference>
<feature type="chain" id="PRO_0000131972" description="Cytidylate kinase">
    <location>
        <begin position="1"/>
        <end position="219"/>
    </location>
</feature>
<feature type="binding site" evidence="1">
    <location>
        <begin position="10"/>
        <end position="18"/>
    </location>
    <ligand>
        <name>ATP</name>
        <dbReference type="ChEBI" id="CHEBI:30616"/>
    </ligand>
</feature>
<name>KCY_STAAC</name>